<comment type="function">
    <text evidence="1">This enzyme is involved in nucleotide metabolism: it produces dUMP, the immediate precursor of thymidine nucleotides and it decreases the intracellular concentration of dUTP so that uracil cannot be incorporated into DNA.</text>
</comment>
<comment type="catalytic activity">
    <reaction evidence="1">
        <text>dUTP + H2O = dUMP + diphosphate + H(+)</text>
        <dbReference type="Rhea" id="RHEA:10248"/>
        <dbReference type="ChEBI" id="CHEBI:15377"/>
        <dbReference type="ChEBI" id="CHEBI:15378"/>
        <dbReference type="ChEBI" id="CHEBI:33019"/>
        <dbReference type="ChEBI" id="CHEBI:61555"/>
        <dbReference type="ChEBI" id="CHEBI:246422"/>
        <dbReference type="EC" id="3.6.1.23"/>
    </reaction>
</comment>
<comment type="cofactor">
    <cofactor evidence="1">
        <name>Mg(2+)</name>
        <dbReference type="ChEBI" id="CHEBI:18420"/>
    </cofactor>
</comment>
<comment type="pathway">
    <text evidence="1">Pyrimidine metabolism; dUMP biosynthesis; dUMP from dCTP (dUTP route): step 2/2.</text>
</comment>
<comment type="similarity">
    <text evidence="1">Belongs to the dUTPase family.</text>
</comment>
<keyword id="KW-0378">Hydrolase</keyword>
<keyword id="KW-0460">Magnesium</keyword>
<keyword id="KW-0479">Metal-binding</keyword>
<keyword id="KW-0546">Nucleotide metabolism</keyword>
<keyword id="KW-1185">Reference proteome</keyword>
<gene>
    <name evidence="1" type="primary">dut</name>
    <name type="ordered locus">Dtur_0831</name>
</gene>
<organism>
    <name type="scientific">Dictyoglomus turgidum (strain DSM 6724 / Z-1310)</name>
    <dbReference type="NCBI Taxonomy" id="515635"/>
    <lineage>
        <taxon>Bacteria</taxon>
        <taxon>Pseudomonadati</taxon>
        <taxon>Dictyoglomota</taxon>
        <taxon>Dictyoglomia</taxon>
        <taxon>Dictyoglomales</taxon>
        <taxon>Dictyoglomaceae</taxon>
        <taxon>Dictyoglomus</taxon>
    </lineage>
</organism>
<proteinExistence type="inferred from homology"/>
<protein>
    <recommendedName>
        <fullName evidence="1">Deoxyuridine 5'-triphosphate nucleotidohydrolase</fullName>
        <shortName evidence="1">dUTPase</shortName>
        <ecNumber evidence="1">3.6.1.23</ecNumber>
    </recommendedName>
    <alternativeName>
        <fullName evidence="1">dUTP pyrophosphatase</fullName>
    </alternativeName>
</protein>
<name>DUT_DICTD</name>
<dbReference type="EC" id="3.6.1.23" evidence="1"/>
<dbReference type="EMBL" id="CP001251">
    <property type="protein sequence ID" value="ACK42112.1"/>
    <property type="molecule type" value="Genomic_DNA"/>
</dbReference>
<dbReference type="RefSeq" id="WP_012583196.1">
    <property type="nucleotide sequence ID" value="NC_011661.1"/>
</dbReference>
<dbReference type="RefSeq" id="YP_002352726.1">
    <property type="nucleotide sequence ID" value="NC_011661.1"/>
</dbReference>
<dbReference type="SMR" id="B8E029"/>
<dbReference type="FunCoup" id="B8E029">
    <property type="interactions" value="223"/>
</dbReference>
<dbReference type="STRING" id="515635.Dtur_0831"/>
<dbReference type="EnsemblBacteria" id="ACK42112">
    <property type="protein sequence ID" value="ACK42112"/>
    <property type="gene ID" value="Dtur_0831"/>
</dbReference>
<dbReference type="KEGG" id="dtu:Dtur_0831"/>
<dbReference type="PATRIC" id="fig|515635.4.peg.870"/>
<dbReference type="eggNOG" id="COG0756">
    <property type="taxonomic scope" value="Bacteria"/>
</dbReference>
<dbReference type="HOGENOM" id="CLU_068508_1_3_0"/>
<dbReference type="InParanoid" id="B8E029"/>
<dbReference type="OrthoDB" id="9809956at2"/>
<dbReference type="UniPathway" id="UPA00610">
    <property type="reaction ID" value="UER00666"/>
</dbReference>
<dbReference type="Proteomes" id="UP000007719">
    <property type="component" value="Chromosome"/>
</dbReference>
<dbReference type="GO" id="GO:0004170">
    <property type="term" value="F:dUTP diphosphatase activity"/>
    <property type="evidence" value="ECO:0000318"/>
    <property type="project" value="GO_Central"/>
</dbReference>
<dbReference type="GO" id="GO:0000287">
    <property type="term" value="F:magnesium ion binding"/>
    <property type="evidence" value="ECO:0000318"/>
    <property type="project" value="GO_Central"/>
</dbReference>
<dbReference type="GO" id="GO:0006226">
    <property type="term" value="P:dUMP biosynthetic process"/>
    <property type="evidence" value="ECO:0000318"/>
    <property type="project" value="GO_Central"/>
</dbReference>
<dbReference type="GO" id="GO:0046081">
    <property type="term" value="P:dUTP catabolic process"/>
    <property type="evidence" value="ECO:0000318"/>
    <property type="project" value="GO_Central"/>
</dbReference>
<dbReference type="CDD" id="cd07557">
    <property type="entry name" value="trimeric_dUTPase"/>
    <property type="match status" value="1"/>
</dbReference>
<dbReference type="Gene3D" id="2.70.40.10">
    <property type="match status" value="1"/>
</dbReference>
<dbReference type="HAMAP" id="MF_00116">
    <property type="entry name" value="dUTPase_bact"/>
    <property type="match status" value="1"/>
</dbReference>
<dbReference type="InterPro" id="IPR008181">
    <property type="entry name" value="dUTPase"/>
</dbReference>
<dbReference type="InterPro" id="IPR029054">
    <property type="entry name" value="dUTPase-like"/>
</dbReference>
<dbReference type="InterPro" id="IPR036157">
    <property type="entry name" value="dUTPase-like_sf"/>
</dbReference>
<dbReference type="InterPro" id="IPR033704">
    <property type="entry name" value="dUTPase_trimeric"/>
</dbReference>
<dbReference type="NCBIfam" id="TIGR00576">
    <property type="entry name" value="dut"/>
    <property type="match status" value="1"/>
</dbReference>
<dbReference type="NCBIfam" id="NF001862">
    <property type="entry name" value="PRK00601.1"/>
    <property type="match status" value="1"/>
</dbReference>
<dbReference type="PANTHER" id="PTHR11241">
    <property type="entry name" value="DEOXYURIDINE 5'-TRIPHOSPHATE NUCLEOTIDOHYDROLASE"/>
    <property type="match status" value="1"/>
</dbReference>
<dbReference type="PANTHER" id="PTHR11241:SF0">
    <property type="entry name" value="DEOXYURIDINE 5'-TRIPHOSPHATE NUCLEOTIDOHYDROLASE"/>
    <property type="match status" value="1"/>
</dbReference>
<dbReference type="Pfam" id="PF00692">
    <property type="entry name" value="dUTPase"/>
    <property type="match status" value="1"/>
</dbReference>
<dbReference type="SUPFAM" id="SSF51283">
    <property type="entry name" value="dUTPase-like"/>
    <property type="match status" value="1"/>
</dbReference>
<accession>B8E029</accession>
<reference key="1">
    <citation type="journal article" date="2016" name="Front. Microbiol.">
        <title>The complete genome sequence of hyperthermophile Dictyoglomus turgidum DSM 6724 reveals a specialized carbohydrate fermentor.</title>
        <authorList>
            <person name="Brumm P.J."/>
            <person name="Gowda K."/>
            <person name="Robb F.T."/>
            <person name="Mead D.A."/>
        </authorList>
    </citation>
    <scope>NUCLEOTIDE SEQUENCE [LARGE SCALE GENOMIC DNA]</scope>
    <source>
        <strain>DSM 6724 / Z-1310</strain>
    </source>
</reference>
<feature type="chain" id="PRO_1000119233" description="Deoxyuridine 5'-triphosphate nucleotidohydrolase">
    <location>
        <begin position="1"/>
        <end position="147"/>
    </location>
</feature>
<feature type="binding site" evidence="1">
    <location>
        <begin position="67"/>
        <end position="69"/>
    </location>
    <ligand>
        <name>substrate</name>
    </ligand>
</feature>
<feature type="binding site" evidence="1">
    <location>
        <position position="80"/>
    </location>
    <ligand>
        <name>substrate</name>
    </ligand>
</feature>
<feature type="binding site" evidence="1">
    <location>
        <begin position="84"/>
        <end position="86"/>
    </location>
    <ligand>
        <name>substrate</name>
    </ligand>
</feature>
<evidence type="ECO:0000255" key="1">
    <source>
        <dbReference type="HAMAP-Rule" id="MF_00116"/>
    </source>
</evidence>
<sequence>MIRVLIERIDKDLPLPNYATHGSAALDLYSRIDFELPPFGEIGGGLVIPTGIRIALPEGYLALVLPRSGLAAREGISVLNTPGLIDSDYRGEIFVNLINFSNKPFLGKRGMRIAQLLVLQYSRIIWEEVEQLPQTERGEGGLGSTGL</sequence>